<accession>Q030P1</accession>
<organism>
    <name type="scientific">Lactococcus lactis subsp. cremoris (strain SK11)</name>
    <dbReference type="NCBI Taxonomy" id="272622"/>
    <lineage>
        <taxon>Bacteria</taxon>
        <taxon>Bacillati</taxon>
        <taxon>Bacillota</taxon>
        <taxon>Bacilli</taxon>
        <taxon>Lactobacillales</taxon>
        <taxon>Streptococcaceae</taxon>
        <taxon>Lactococcus</taxon>
        <taxon>Lactococcus cremoris subsp. cremoris</taxon>
    </lineage>
</organism>
<comment type="function">
    <text evidence="1">Catalyzes the thiamine diphosphate-dependent decarboxylation of 2-oxoglutarate and the subsequent addition of the resulting succinic semialdehyde-thiamine pyrophosphate anion to isochorismate to yield 2-succinyl-5-enolpyruvyl-6-hydroxy-3-cyclohexene-1-carboxylate (SEPHCHC).</text>
</comment>
<comment type="catalytic activity">
    <reaction evidence="1">
        <text>isochorismate + 2-oxoglutarate + H(+) = 5-enolpyruvoyl-6-hydroxy-2-succinyl-cyclohex-3-ene-1-carboxylate + CO2</text>
        <dbReference type="Rhea" id="RHEA:25593"/>
        <dbReference type="ChEBI" id="CHEBI:15378"/>
        <dbReference type="ChEBI" id="CHEBI:16526"/>
        <dbReference type="ChEBI" id="CHEBI:16810"/>
        <dbReference type="ChEBI" id="CHEBI:29780"/>
        <dbReference type="ChEBI" id="CHEBI:58818"/>
        <dbReference type="EC" id="2.2.1.9"/>
    </reaction>
</comment>
<comment type="cofactor">
    <cofactor evidence="1">
        <name>Mg(2+)</name>
        <dbReference type="ChEBI" id="CHEBI:18420"/>
    </cofactor>
    <cofactor evidence="1">
        <name>Mn(2+)</name>
        <dbReference type="ChEBI" id="CHEBI:29035"/>
    </cofactor>
</comment>
<comment type="cofactor">
    <cofactor evidence="1">
        <name>thiamine diphosphate</name>
        <dbReference type="ChEBI" id="CHEBI:58937"/>
    </cofactor>
    <text evidence="1">Binds 1 thiamine pyrophosphate per subunit.</text>
</comment>
<comment type="pathway">
    <text evidence="1">Quinol/quinone metabolism; 1,4-dihydroxy-2-naphthoate biosynthesis; 1,4-dihydroxy-2-naphthoate from chorismate: step 2/7.</text>
</comment>
<comment type="pathway">
    <text evidence="1">Quinol/quinone metabolism; menaquinone biosynthesis.</text>
</comment>
<comment type="subunit">
    <text evidence="1">Homodimer.</text>
</comment>
<comment type="similarity">
    <text evidence="1">Belongs to the TPP enzyme family. MenD subfamily.</text>
</comment>
<sequence>MTNEYLAPFVDELFNLGVREAVFSPGSRSTALAMLFEEYKKYDTYVNIDERSAAFFALGIAKANRRPVVLVCTSGSAAAHHFPAITEAKMSRIPLIILTADRPAELQFVGAPQTLDQTRFFGNFVNHFENLEAPQPQAKNFWTYPRKVAQRAFLSALDQMAGPVQINVPLRDPLVPKLKSENYEKGRYKLPFKFFKGQQSAFFDEALLSSKTLILAGANSAENYSESLLKLAEQLKAPILADPLSNLRNHNSPFVMDSYDAFLANDDLKTDLKAESILLFGQMPVSKRLQQFIALNDEAQFIQVDPALVYRNPSLTTTIMVQSNVTTFANSIQKVNQDFSYLEKWQKAQEKMRHQLEKVAQEENPFEGRFVQELQKHLKALDAQLLVSNSMEIRDIDYWWEKEDSKVRILGNRGVNGIDGTESTALGIATTGKPTVLLTGDLSMLHDLNGLIIGKTHELNLTIVLFNNDGGGIFHHLAQKGVPNFDYLFSTPHGLNFEGLAELTGLDYHLVSNYADFGQQFETSICQPGIHLLEIKTDKDLSLALHKKYTAYEN</sequence>
<dbReference type="EC" id="2.2.1.9" evidence="1"/>
<dbReference type="EMBL" id="CP000425">
    <property type="protein sequence ID" value="ABJ72331.1"/>
    <property type="molecule type" value="Genomic_DNA"/>
</dbReference>
<dbReference type="RefSeq" id="WP_011675701.1">
    <property type="nucleotide sequence ID" value="NC_008527.1"/>
</dbReference>
<dbReference type="SMR" id="Q030P1"/>
<dbReference type="KEGG" id="llc:LACR_0773"/>
<dbReference type="HOGENOM" id="CLU_006051_3_0_9"/>
<dbReference type="UniPathway" id="UPA00079"/>
<dbReference type="UniPathway" id="UPA01057">
    <property type="reaction ID" value="UER00164"/>
</dbReference>
<dbReference type="Proteomes" id="UP000000240">
    <property type="component" value="Chromosome"/>
</dbReference>
<dbReference type="GO" id="GO:0070204">
    <property type="term" value="F:2-succinyl-5-enolpyruvyl-6-hydroxy-3-cyclohexene-1-carboxylic-acid synthase activity"/>
    <property type="evidence" value="ECO:0007669"/>
    <property type="project" value="UniProtKB-UniRule"/>
</dbReference>
<dbReference type="GO" id="GO:0000287">
    <property type="term" value="F:magnesium ion binding"/>
    <property type="evidence" value="ECO:0007669"/>
    <property type="project" value="UniProtKB-UniRule"/>
</dbReference>
<dbReference type="GO" id="GO:0030145">
    <property type="term" value="F:manganese ion binding"/>
    <property type="evidence" value="ECO:0007669"/>
    <property type="project" value="UniProtKB-UniRule"/>
</dbReference>
<dbReference type="GO" id="GO:0030976">
    <property type="term" value="F:thiamine pyrophosphate binding"/>
    <property type="evidence" value="ECO:0007669"/>
    <property type="project" value="UniProtKB-UniRule"/>
</dbReference>
<dbReference type="GO" id="GO:0009234">
    <property type="term" value="P:menaquinone biosynthetic process"/>
    <property type="evidence" value="ECO:0007669"/>
    <property type="project" value="UniProtKB-UniRule"/>
</dbReference>
<dbReference type="CDD" id="cd07037">
    <property type="entry name" value="TPP_PYR_MenD"/>
    <property type="match status" value="1"/>
</dbReference>
<dbReference type="CDD" id="cd02009">
    <property type="entry name" value="TPP_SHCHC_synthase"/>
    <property type="match status" value="1"/>
</dbReference>
<dbReference type="Gene3D" id="3.40.50.970">
    <property type="match status" value="2"/>
</dbReference>
<dbReference type="Gene3D" id="3.40.50.1220">
    <property type="entry name" value="TPP-binding domain"/>
    <property type="match status" value="1"/>
</dbReference>
<dbReference type="HAMAP" id="MF_01659">
    <property type="entry name" value="MenD"/>
    <property type="match status" value="1"/>
</dbReference>
<dbReference type="InterPro" id="IPR029035">
    <property type="entry name" value="DHS-like_NAD/FAD-binding_dom"/>
</dbReference>
<dbReference type="InterPro" id="IPR004433">
    <property type="entry name" value="MenaQ_synth_MenD"/>
</dbReference>
<dbReference type="InterPro" id="IPR032264">
    <property type="entry name" value="MenD_middle"/>
</dbReference>
<dbReference type="InterPro" id="IPR029061">
    <property type="entry name" value="THDP-binding"/>
</dbReference>
<dbReference type="InterPro" id="IPR012001">
    <property type="entry name" value="Thiamin_PyroP_enz_TPP-bd_dom"/>
</dbReference>
<dbReference type="InterPro" id="IPR011766">
    <property type="entry name" value="TPP_enzyme_TPP-bd"/>
</dbReference>
<dbReference type="NCBIfam" id="TIGR00173">
    <property type="entry name" value="menD"/>
    <property type="match status" value="1"/>
</dbReference>
<dbReference type="PANTHER" id="PTHR42916">
    <property type="entry name" value="2-SUCCINYL-5-ENOLPYRUVYL-6-HYDROXY-3-CYCLOHEXENE-1-CARBOXYLATE SYNTHASE"/>
    <property type="match status" value="1"/>
</dbReference>
<dbReference type="PANTHER" id="PTHR42916:SF1">
    <property type="entry name" value="PROTEIN PHYLLO, CHLOROPLASTIC"/>
    <property type="match status" value="1"/>
</dbReference>
<dbReference type="Pfam" id="PF02775">
    <property type="entry name" value="TPP_enzyme_C"/>
    <property type="match status" value="1"/>
</dbReference>
<dbReference type="Pfam" id="PF16582">
    <property type="entry name" value="TPP_enzyme_M_2"/>
    <property type="match status" value="1"/>
</dbReference>
<dbReference type="Pfam" id="PF02776">
    <property type="entry name" value="TPP_enzyme_N"/>
    <property type="match status" value="1"/>
</dbReference>
<dbReference type="PIRSF" id="PIRSF004983">
    <property type="entry name" value="MenD"/>
    <property type="match status" value="1"/>
</dbReference>
<dbReference type="SUPFAM" id="SSF52467">
    <property type="entry name" value="DHS-like NAD/FAD-binding domain"/>
    <property type="match status" value="1"/>
</dbReference>
<dbReference type="SUPFAM" id="SSF52518">
    <property type="entry name" value="Thiamin diphosphate-binding fold (THDP-binding)"/>
    <property type="match status" value="2"/>
</dbReference>
<keyword id="KW-0460">Magnesium</keyword>
<keyword id="KW-0464">Manganese</keyword>
<keyword id="KW-0474">Menaquinone biosynthesis</keyword>
<keyword id="KW-0479">Metal-binding</keyword>
<keyword id="KW-0786">Thiamine pyrophosphate</keyword>
<keyword id="KW-0808">Transferase</keyword>
<protein>
    <recommendedName>
        <fullName evidence="1">2-succinyl-5-enolpyruvyl-6-hydroxy-3-cyclohexene-1-carboxylate synthase</fullName>
        <shortName evidence="1">SEPHCHC synthase</shortName>
        <ecNumber evidence="1">2.2.1.9</ecNumber>
    </recommendedName>
    <alternativeName>
        <fullName evidence="1">Menaquinone biosynthesis protein MenD</fullName>
    </alternativeName>
</protein>
<gene>
    <name evidence="1" type="primary">menD</name>
    <name type="ordered locus">LACR_0773</name>
</gene>
<evidence type="ECO:0000255" key="1">
    <source>
        <dbReference type="HAMAP-Rule" id="MF_01659"/>
    </source>
</evidence>
<reference key="1">
    <citation type="journal article" date="2006" name="Proc. Natl. Acad. Sci. U.S.A.">
        <title>Comparative genomics of the lactic acid bacteria.</title>
        <authorList>
            <person name="Makarova K.S."/>
            <person name="Slesarev A."/>
            <person name="Wolf Y.I."/>
            <person name="Sorokin A."/>
            <person name="Mirkin B."/>
            <person name="Koonin E.V."/>
            <person name="Pavlov A."/>
            <person name="Pavlova N."/>
            <person name="Karamychev V."/>
            <person name="Polouchine N."/>
            <person name="Shakhova V."/>
            <person name="Grigoriev I."/>
            <person name="Lou Y."/>
            <person name="Rohksar D."/>
            <person name="Lucas S."/>
            <person name="Huang K."/>
            <person name="Goodstein D.M."/>
            <person name="Hawkins T."/>
            <person name="Plengvidhya V."/>
            <person name="Welker D."/>
            <person name="Hughes J."/>
            <person name="Goh Y."/>
            <person name="Benson A."/>
            <person name="Baldwin K."/>
            <person name="Lee J.-H."/>
            <person name="Diaz-Muniz I."/>
            <person name="Dosti B."/>
            <person name="Smeianov V."/>
            <person name="Wechter W."/>
            <person name="Barabote R."/>
            <person name="Lorca G."/>
            <person name="Altermann E."/>
            <person name="Barrangou R."/>
            <person name="Ganesan B."/>
            <person name="Xie Y."/>
            <person name="Rawsthorne H."/>
            <person name="Tamir D."/>
            <person name="Parker C."/>
            <person name="Breidt F."/>
            <person name="Broadbent J.R."/>
            <person name="Hutkins R."/>
            <person name="O'Sullivan D."/>
            <person name="Steele J."/>
            <person name="Unlu G."/>
            <person name="Saier M.H. Jr."/>
            <person name="Klaenhammer T."/>
            <person name="Richardson P."/>
            <person name="Kozyavkin S."/>
            <person name="Weimer B.C."/>
            <person name="Mills D.A."/>
        </authorList>
    </citation>
    <scope>NUCLEOTIDE SEQUENCE [LARGE SCALE GENOMIC DNA]</scope>
    <source>
        <strain>SK11</strain>
    </source>
</reference>
<proteinExistence type="inferred from homology"/>
<feature type="chain" id="PRO_0000341762" description="2-succinyl-5-enolpyruvyl-6-hydroxy-3-cyclohexene-1-carboxylate synthase">
    <location>
        <begin position="1"/>
        <end position="554"/>
    </location>
</feature>
<name>MEND_LACLS</name>